<evidence type="ECO:0000250" key="1">
    <source>
        <dbReference type="UniProtKB" id="P00138"/>
    </source>
</evidence>
<keyword id="KW-0903">Direct protein sequencing</keyword>
<keyword id="KW-0249">Electron transport</keyword>
<keyword id="KW-0349">Heme</keyword>
<keyword id="KW-0408">Iron</keyword>
<keyword id="KW-0479">Metal-binding</keyword>
<keyword id="KW-0813">Transport</keyword>
<protein>
    <recommendedName>
        <fullName>Cytochrome c'</fullName>
    </recommendedName>
</protein>
<comment type="function">
    <text>Cytochrome c' is the most widely occurring bacterial c-type cytochrome. Cytochromes c' are high-spin proteins and the heme has no sixth ligand. Their exact function is not known.</text>
</comment>
<comment type="subunit">
    <text>Homodimer.</text>
</comment>
<comment type="PTM">
    <text evidence="1">Binds 1 heme c group covalently per subunit.</text>
</comment>
<dbReference type="PIR" id="A00138">
    <property type="entry name" value="CCQFCP"/>
</dbReference>
<dbReference type="SMR" id="P00145"/>
<dbReference type="GO" id="GO:0042597">
    <property type="term" value="C:periplasmic space"/>
    <property type="evidence" value="ECO:0007669"/>
    <property type="project" value="InterPro"/>
</dbReference>
<dbReference type="GO" id="GO:0009055">
    <property type="term" value="F:electron transfer activity"/>
    <property type="evidence" value="ECO:0007669"/>
    <property type="project" value="InterPro"/>
</dbReference>
<dbReference type="GO" id="GO:0020037">
    <property type="term" value="F:heme binding"/>
    <property type="evidence" value="ECO:0007669"/>
    <property type="project" value="InterPro"/>
</dbReference>
<dbReference type="GO" id="GO:0005506">
    <property type="term" value="F:iron ion binding"/>
    <property type="evidence" value="ECO:0007669"/>
    <property type="project" value="InterPro"/>
</dbReference>
<dbReference type="GO" id="GO:0022900">
    <property type="term" value="P:electron transport chain"/>
    <property type="evidence" value="ECO:0007669"/>
    <property type="project" value="InterPro"/>
</dbReference>
<dbReference type="Gene3D" id="1.20.120.10">
    <property type="entry name" value="Cytochrome c/b562"/>
    <property type="match status" value="1"/>
</dbReference>
<dbReference type="InterPro" id="IPR010980">
    <property type="entry name" value="Cyt_c/b562"/>
</dbReference>
<dbReference type="InterPro" id="IPR002321">
    <property type="entry name" value="Cyt_c_II"/>
</dbReference>
<dbReference type="InterPro" id="IPR012127">
    <property type="entry name" value="Cyt_c_prime"/>
</dbReference>
<dbReference type="InterPro" id="IPR015984">
    <property type="entry name" value="Cyt_c_prime_subgr"/>
</dbReference>
<dbReference type="Pfam" id="PF01322">
    <property type="entry name" value="Cytochrom_C_2"/>
    <property type="match status" value="1"/>
</dbReference>
<dbReference type="PIRSF" id="PIRSF000027">
    <property type="entry name" value="Cytc_c_prime"/>
    <property type="match status" value="1"/>
</dbReference>
<dbReference type="PRINTS" id="PR00608">
    <property type="entry name" value="CYTCHROMECII"/>
</dbReference>
<dbReference type="SUPFAM" id="SSF47175">
    <property type="entry name" value="Cytochromes"/>
    <property type="match status" value="1"/>
</dbReference>
<dbReference type="PROSITE" id="PS51009">
    <property type="entry name" value="CYTCII"/>
    <property type="match status" value="1"/>
</dbReference>
<reference key="1">
    <citation type="journal article" date="1981" name="Proc. Natl. Acad. Sci. U.S.A.">
        <title>Amino acid sequences of bacterial cytochromes c' and c-556.</title>
        <authorList>
            <person name="Ambler R.P."/>
            <person name="Bartsch R.G."/>
            <person name="Daniel M."/>
            <person name="Kamen M.D."/>
            <person name="McLellan L."/>
            <person name="Meyer T.E."/>
            <person name="van Beeumen J."/>
        </authorList>
    </citation>
    <scope>PROTEIN SEQUENCE</scope>
    <source>
        <strain>SP113</strain>
    </source>
</reference>
<sequence>ASPEAYVEYRKQALKASGDHMKALSAIVKGQLPLNAEAAKHAEAIAAIMESLPAAFPEGTAGIAKTEAKAVVWSKADEFKADAVKSADAAKALAQAATAGDTAQMGKALAALGGTCKGCHETFRE</sequence>
<name>CYCP_PARPM</name>
<accession>P00145</accession>
<proteinExistence type="evidence at protein level"/>
<feature type="chain" id="PRO_0000108375" description="Cytochrome c'">
    <location>
        <begin position="1"/>
        <end position="125"/>
    </location>
</feature>
<feature type="binding site" evidence="1">
    <location>
        <position position="10"/>
    </location>
    <ligand>
        <name>heme c</name>
        <dbReference type="ChEBI" id="CHEBI:61717"/>
    </ligand>
</feature>
<feature type="binding site" evidence="1">
    <location>
        <position position="67"/>
    </location>
    <ligand>
        <name>heme c</name>
        <dbReference type="ChEBI" id="CHEBI:61717"/>
    </ligand>
</feature>
<feature type="binding site" description="covalent" evidence="1">
    <location>
        <position position="116"/>
    </location>
    <ligand>
        <name>heme c</name>
        <dbReference type="ChEBI" id="CHEBI:61717"/>
    </ligand>
</feature>
<feature type="binding site" description="covalent" evidence="1">
    <location>
        <position position="119"/>
    </location>
    <ligand>
        <name>heme c</name>
        <dbReference type="ChEBI" id="CHEBI:61717"/>
    </ligand>
</feature>
<feature type="binding site" description="axial binding residue" evidence="1">
    <location>
        <position position="120"/>
    </location>
    <ligand>
        <name>heme c</name>
        <dbReference type="ChEBI" id="CHEBI:61717"/>
    </ligand>
    <ligandPart>
        <name>Fe</name>
        <dbReference type="ChEBI" id="CHEBI:18248"/>
    </ligandPart>
</feature>
<organism>
    <name type="scientific">Pararhodospirillum photometricum</name>
    <name type="common">Rhodospirillum photometricum</name>
    <dbReference type="NCBI Taxonomy" id="1084"/>
    <lineage>
        <taxon>Bacteria</taxon>
        <taxon>Pseudomonadati</taxon>
        <taxon>Pseudomonadota</taxon>
        <taxon>Alphaproteobacteria</taxon>
        <taxon>Rhodospirillales</taxon>
        <taxon>Rhodospirillaceae</taxon>
        <taxon>Pararhodospirillum</taxon>
    </lineage>
</organism>